<comment type="function">
    <text evidence="1">Involved in the biosynthesis of lipid A, a phosphorylated glycolipid that anchors the lipopolysaccharide to the outer membrane of the cell.</text>
</comment>
<comment type="catalytic activity">
    <reaction evidence="1">
        <text>a (3R)-hydroxyacyl-[ACP] + UDP-N-acetyl-alpha-D-glucosamine = a UDP-3-O-[(3R)-3-hydroxyacyl]-N-acetyl-alpha-D-glucosamine + holo-[ACP]</text>
        <dbReference type="Rhea" id="RHEA:67812"/>
        <dbReference type="Rhea" id="RHEA-COMP:9685"/>
        <dbReference type="Rhea" id="RHEA-COMP:9945"/>
        <dbReference type="ChEBI" id="CHEBI:57705"/>
        <dbReference type="ChEBI" id="CHEBI:64479"/>
        <dbReference type="ChEBI" id="CHEBI:78827"/>
        <dbReference type="ChEBI" id="CHEBI:173225"/>
        <dbReference type="EC" id="2.3.1.129"/>
    </reaction>
</comment>
<comment type="pathway">
    <text evidence="1">Glycolipid biosynthesis; lipid IV(A) biosynthesis; lipid IV(A) from (3R)-3-hydroxytetradecanoyl-[acyl-carrier-protein] and UDP-N-acetyl-alpha-D-glucosamine: step 1/6.</text>
</comment>
<comment type="subunit">
    <text evidence="1">Homotrimer.</text>
</comment>
<comment type="subcellular location">
    <subcellularLocation>
        <location evidence="1">Cytoplasm</location>
    </subcellularLocation>
</comment>
<comment type="similarity">
    <text evidence="1">Belongs to the transferase hexapeptide repeat family. LpxA subfamily.</text>
</comment>
<feature type="chain" id="PRO_1000122725" description="Acyl-[acyl-carrier-protein]--UDP-N-acetylglucosamine O-acyltransferase">
    <location>
        <begin position="1"/>
        <end position="262"/>
    </location>
</feature>
<name>LPXA_SALA4</name>
<dbReference type="EC" id="2.3.1.129" evidence="1"/>
<dbReference type="EMBL" id="CP001138">
    <property type="protein sequence ID" value="ACH50132.1"/>
    <property type="molecule type" value="Genomic_DNA"/>
</dbReference>
<dbReference type="RefSeq" id="WP_000565950.1">
    <property type="nucleotide sequence ID" value="NC_011149.1"/>
</dbReference>
<dbReference type="SMR" id="B5F8U2"/>
<dbReference type="KEGG" id="sea:SeAg_B0269"/>
<dbReference type="HOGENOM" id="CLU_061249_0_0_6"/>
<dbReference type="UniPathway" id="UPA00359">
    <property type="reaction ID" value="UER00477"/>
</dbReference>
<dbReference type="Proteomes" id="UP000008819">
    <property type="component" value="Chromosome"/>
</dbReference>
<dbReference type="GO" id="GO:0005737">
    <property type="term" value="C:cytoplasm"/>
    <property type="evidence" value="ECO:0007669"/>
    <property type="project" value="UniProtKB-SubCell"/>
</dbReference>
<dbReference type="GO" id="GO:0016020">
    <property type="term" value="C:membrane"/>
    <property type="evidence" value="ECO:0007669"/>
    <property type="project" value="GOC"/>
</dbReference>
<dbReference type="GO" id="GO:0008780">
    <property type="term" value="F:acyl-[acyl-carrier-protein]-UDP-N-acetylglucosamine O-acyltransferase activity"/>
    <property type="evidence" value="ECO:0007669"/>
    <property type="project" value="UniProtKB-UniRule"/>
</dbReference>
<dbReference type="GO" id="GO:0009245">
    <property type="term" value="P:lipid A biosynthetic process"/>
    <property type="evidence" value="ECO:0007669"/>
    <property type="project" value="UniProtKB-UniRule"/>
</dbReference>
<dbReference type="CDD" id="cd03351">
    <property type="entry name" value="LbH_UDP-GlcNAc_AT"/>
    <property type="match status" value="1"/>
</dbReference>
<dbReference type="FunFam" id="2.160.10.10:FF:000003">
    <property type="entry name" value="Acyl-[acyl-carrier-protein]--UDP-N-acetylglucosamine O-acyltransferase"/>
    <property type="match status" value="1"/>
</dbReference>
<dbReference type="Gene3D" id="2.160.10.10">
    <property type="entry name" value="Hexapeptide repeat proteins"/>
    <property type="match status" value="1"/>
</dbReference>
<dbReference type="Gene3D" id="1.20.1180.10">
    <property type="entry name" value="Udp N-acetylglucosamine O-acyltransferase, C-terminal domain"/>
    <property type="match status" value="1"/>
</dbReference>
<dbReference type="HAMAP" id="MF_00387">
    <property type="entry name" value="LpxA"/>
    <property type="match status" value="1"/>
</dbReference>
<dbReference type="InterPro" id="IPR029098">
    <property type="entry name" value="Acetyltransf_C"/>
</dbReference>
<dbReference type="InterPro" id="IPR037157">
    <property type="entry name" value="Acetyltransf_C_sf"/>
</dbReference>
<dbReference type="InterPro" id="IPR001451">
    <property type="entry name" value="Hexapep"/>
</dbReference>
<dbReference type="InterPro" id="IPR018357">
    <property type="entry name" value="Hexapep_transf_CS"/>
</dbReference>
<dbReference type="InterPro" id="IPR010137">
    <property type="entry name" value="Lipid_A_LpxA"/>
</dbReference>
<dbReference type="InterPro" id="IPR011004">
    <property type="entry name" value="Trimer_LpxA-like_sf"/>
</dbReference>
<dbReference type="NCBIfam" id="TIGR01852">
    <property type="entry name" value="lipid_A_lpxA"/>
    <property type="match status" value="1"/>
</dbReference>
<dbReference type="NCBIfam" id="NF003657">
    <property type="entry name" value="PRK05289.1"/>
    <property type="match status" value="1"/>
</dbReference>
<dbReference type="PANTHER" id="PTHR43480">
    <property type="entry name" value="ACYL-[ACYL-CARRIER-PROTEIN]--UDP-N-ACETYLGLUCOSAMINE O-ACYLTRANSFERASE"/>
    <property type="match status" value="1"/>
</dbReference>
<dbReference type="PANTHER" id="PTHR43480:SF1">
    <property type="entry name" value="ACYL-[ACYL-CARRIER-PROTEIN]--UDP-N-ACETYLGLUCOSAMINE O-ACYLTRANSFERASE, MITOCHONDRIAL-RELATED"/>
    <property type="match status" value="1"/>
</dbReference>
<dbReference type="Pfam" id="PF13720">
    <property type="entry name" value="Acetyltransf_11"/>
    <property type="match status" value="1"/>
</dbReference>
<dbReference type="Pfam" id="PF00132">
    <property type="entry name" value="Hexapep"/>
    <property type="match status" value="2"/>
</dbReference>
<dbReference type="PIRSF" id="PIRSF000456">
    <property type="entry name" value="UDP-GlcNAc_acltr"/>
    <property type="match status" value="1"/>
</dbReference>
<dbReference type="SUPFAM" id="SSF51161">
    <property type="entry name" value="Trimeric LpxA-like enzymes"/>
    <property type="match status" value="1"/>
</dbReference>
<dbReference type="PROSITE" id="PS00101">
    <property type="entry name" value="HEXAPEP_TRANSFERASES"/>
    <property type="match status" value="2"/>
</dbReference>
<accession>B5F8U2</accession>
<evidence type="ECO:0000255" key="1">
    <source>
        <dbReference type="HAMAP-Rule" id="MF_00387"/>
    </source>
</evidence>
<gene>
    <name evidence="1" type="primary">lpxA</name>
    <name type="ordered locus">SeAg_B0269</name>
</gene>
<organism>
    <name type="scientific">Salmonella agona (strain SL483)</name>
    <dbReference type="NCBI Taxonomy" id="454166"/>
    <lineage>
        <taxon>Bacteria</taxon>
        <taxon>Pseudomonadati</taxon>
        <taxon>Pseudomonadota</taxon>
        <taxon>Gammaproteobacteria</taxon>
        <taxon>Enterobacterales</taxon>
        <taxon>Enterobacteriaceae</taxon>
        <taxon>Salmonella</taxon>
    </lineage>
</organism>
<protein>
    <recommendedName>
        <fullName evidence="1">Acyl-[acyl-carrier-protein]--UDP-N-acetylglucosamine O-acyltransferase</fullName>
        <shortName evidence="1">UDP-N-acetylglucosamine acyltransferase</shortName>
        <ecNumber evidence="1">2.3.1.129</ecNumber>
    </recommendedName>
</protein>
<reference key="1">
    <citation type="journal article" date="2011" name="J. Bacteriol.">
        <title>Comparative genomics of 28 Salmonella enterica isolates: evidence for CRISPR-mediated adaptive sublineage evolution.</title>
        <authorList>
            <person name="Fricke W.F."/>
            <person name="Mammel M.K."/>
            <person name="McDermott P.F."/>
            <person name="Tartera C."/>
            <person name="White D.G."/>
            <person name="Leclerc J.E."/>
            <person name="Ravel J."/>
            <person name="Cebula T.A."/>
        </authorList>
    </citation>
    <scope>NUCLEOTIDE SEQUENCE [LARGE SCALE GENOMIC DNA]</scope>
    <source>
        <strain>SL483</strain>
    </source>
</reference>
<keyword id="KW-0012">Acyltransferase</keyword>
<keyword id="KW-0963">Cytoplasm</keyword>
<keyword id="KW-0441">Lipid A biosynthesis</keyword>
<keyword id="KW-0444">Lipid biosynthesis</keyword>
<keyword id="KW-0443">Lipid metabolism</keyword>
<keyword id="KW-0677">Repeat</keyword>
<keyword id="KW-0808">Transferase</keyword>
<sequence>MIDKSAFIHPTAIVEDGAVIGANAHIGPFCIVGPQVEIGEGTVLKSHVVVNGQTKIGRDNEIYQFASIGEVNQDLKYAGEPTRVEIGDRNRIRESVTIHRGTVQGGGLTKVGSDNLLMINAHVAHDCTVGNRCILANNATLAGHVSVDDFAIIGGMTAVHQFCIIGAHVMVGGCSGVAQDVPPYVIAQGNHATPFGVNIEGLKRRGFSREGLVAIRNAYKLLYRSGKTLDEAKLEIAELAEKHPEVKAFTEFFERSTRGPIR</sequence>
<proteinExistence type="inferred from homology"/>